<evidence type="ECO:0000250" key="1">
    <source>
        <dbReference type="UniProtKB" id="G5EEG7"/>
    </source>
</evidence>
<evidence type="ECO:0000250" key="2">
    <source>
        <dbReference type="UniProtKB" id="Q2TAY7"/>
    </source>
</evidence>
<evidence type="ECO:0000250" key="3">
    <source>
        <dbReference type="UniProtKB" id="Q76B40"/>
    </source>
</evidence>
<evidence type="ECO:0000250" key="4">
    <source>
        <dbReference type="UniProtKB" id="Q99M63"/>
    </source>
</evidence>
<evidence type="ECO:0000255" key="5"/>
<evidence type="ECO:0000255" key="6">
    <source>
        <dbReference type="PROSITE-ProRule" id="PRU00058"/>
    </source>
</evidence>
<evidence type="ECO:0000255" key="7">
    <source>
        <dbReference type="PROSITE-ProRule" id="PRU00126"/>
    </source>
</evidence>
<evidence type="ECO:0000305" key="8"/>
<reference key="1">
    <citation type="submission" date="2006-03" db="EMBL/GenBank/DDBJ databases">
        <authorList>
            <consortium name="Sanger Xenopus tropicalis EST/cDNA project"/>
        </authorList>
    </citation>
    <scope>NUCLEOTIDE SEQUENCE [LARGE SCALE MRNA]</scope>
    <source>
        <tissue>Egg</tissue>
    </source>
</reference>
<reference key="2">
    <citation type="submission" date="2003-12" db="EMBL/GenBank/DDBJ databases">
        <authorList>
            <consortium name="NIH - Xenopus Gene Collection (XGC) project"/>
        </authorList>
    </citation>
    <scope>NUCLEOTIDE SEQUENCE [LARGE SCALE MRNA]</scope>
    <source>
        <tissue>Embryo</tissue>
    </source>
</reference>
<sequence>MSIEIESSDVIRLIMQYLKENSLHRTLATLQEETTVSLNTVDSIESFVADINSGHWDTVLQAIQSLKLPDKTLIDLYEQVVLELIELRELGAARSLLRQTDPMIMLKQNQPERYIHLENLLARSYFDPREAYPDGSSKEKRRAAIAQALAGEVSVVPPSRLMALLGQALKWQQHQGLLPPGMIIDLFRGKAAVKDVEEEKFPTQLSRHIKFGQKSHVECARFSPDGQYLVTGSVDGFIEVWNFTTGKIRKDLKYQAQDNFMMMDDAVLCMCFSRDTEMLATGAQDGKIKVWKIQSGQCLRRFERAHSKGVTCLSFSKDCSQILSASFDQTIRVHGLKSGKTLKEFRGHSSFVNEATFTQDGHYIISASSDGTVKIWNMKTTECSNTFKSLGSTAGTDITVNSVILLPKNPEHFVVCNRSNTVVIMNMQGQIVRSFSSGKREGGDFVCCTLSPRGEWIYCVGEDFVLYCFSTVTGKLERTLTVHEKDVIGIAHHPHQNLIGTYSEDGLLKLWKP</sequence>
<feature type="chain" id="PRO_0000237596" description="WD40 repeat-containing protein SMU1">
    <location>
        <begin position="1"/>
        <end position="513"/>
    </location>
</feature>
<feature type="domain" description="LisH" evidence="7">
    <location>
        <begin position="6"/>
        <end position="38"/>
    </location>
</feature>
<feature type="domain" description="CTLH" evidence="6">
    <location>
        <begin position="40"/>
        <end position="92"/>
    </location>
</feature>
<feature type="repeat" description="WD 1" evidence="5">
    <location>
        <begin position="212"/>
        <end position="253"/>
    </location>
</feature>
<feature type="repeat" description="WD 2" evidence="5">
    <location>
        <begin position="262"/>
        <end position="303"/>
    </location>
</feature>
<feature type="repeat" description="WD 3" evidence="5">
    <location>
        <begin position="305"/>
        <end position="346"/>
    </location>
</feature>
<feature type="repeat" description="WD 4" evidence="5">
    <location>
        <begin position="347"/>
        <end position="386"/>
    </location>
</feature>
<feature type="repeat" description="WD 5" evidence="5">
    <location>
        <begin position="395"/>
        <end position="436"/>
    </location>
</feature>
<feature type="repeat" description="WD 6" evidence="5">
    <location>
        <begin position="440"/>
        <end position="479"/>
    </location>
</feature>
<feature type="repeat" description="WD 7" evidence="5">
    <location>
        <begin position="482"/>
        <end position="513"/>
    </location>
</feature>
<feature type="region of interest" description="Required for interaction with ik" evidence="2">
    <location>
        <begin position="1"/>
        <end position="315"/>
    </location>
</feature>
<name>SMU1_XENTR</name>
<gene>
    <name type="primary">smu1</name>
    <name type="ORF">TEgg022d24.1</name>
</gene>
<organism>
    <name type="scientific">Xenopus tropicalis</name>
    <name type="common">Western clawed frog</name>
    <name type="synonym">Silurana tropicalis</name>
    <dbReference type="NCBI Taxonomy" id="8364"/>
    <lineage>
        <taxon>Eukaryota</taxon>
        <taxon>Metazoa</taxon>
        <taxon>Chordata</taxon>
        <taxon>Craniata</taxon>
        <taxon>Vertebrata</taxon>
        <taxon>Euteleostomi</taxon>
        <taxon>Amphibia</taxon>
        <taxon>Batrachia</taxon>
        <taxon>Anura</taxon>
        <taxon>Pipoidea</taxon>
        <taxon>Pipidae</taxon>
        <taxon>Xenopodinae</taxon>
        <taxon>Xenopus</taxon>
        <taxon>Silurana</taxon>
    </lineage>
</organism>
<protein>
    <recommendedName>
        <fullName>WD40 repeat-containing protein SMU1</fullName>
    </recommendedName>
    <alternativeName>
        <fullName>Smu-1 suppressor of mec-8 and unc-52 protein homolog</fullName>
    </alternativeName>
</protein>
<comment type="function">
    <text evidence="2 3">Involved in pre-mRNA splicing as a component of the spliceosome (By similarity). Required for normal accumulation of ik (By similarity). Required for normal mitotic spindle assembly and normal progress through mitosis (By similarity).</text>
</comment>
<comment type="subunit">
    <text evidence="2">Component of the spliceosome B complex. Interacts with ik.</text>
</comment>
<comment type="subcellular location">
    <subcellularLocation>
        <location evidence="4">Cytoplasm</location>
    </subcellularLocation>
    <subcellularLocation>
        <location evidence="3">Nucleus</location>
    </subcellularLocation>
    <subcellularLocation>
        <location evidence="3">Nucleus speckle</location>
    </subcellularLocation>
    <text evidence="3">Colocalizes with srsf1 in nuclear speckles.</text>
</comment>
<comment type="domain">
    <text evidence="1">The WD repeats assemble into a seven-bladed WD propeller.</text>
</comment>
<comment type="similarity">
    <text evidence="8">Belongs to the WD repeat SMU1 family.</text>
</comment>
<accession>Q6P4J8</accession>
<keyword id="KW-0963">Cytoplasm</keyword>
<keyword id="KW-0507">mRNA processing</keyword>
<keyword id="KW-0508">mRNA splicing</keyword>
<keyword id="KW-0539">Nucleus</keyword>
<keyword id="KW-1185">Reference proteome</keyword>
<keyword id="KW-0677">Repeat</keyword>
<keyword id="KW-0747">Spliceosome</keyword>
<keyword id="KW-0853">WD repeat</keyword>
<dbReference type="EMBL" id="CR855593">
    <property type="protein sequence ID" value="CAJ82053.1"/>
    <property type="molecule type" value="mRNA"/>
</dbReference>
<dbReference type="EMBL" id="BC063369">
    <property type="protein sequence ID" value="AAH63369.1"/>
    <property type="molecule type" value="mRNA"/>
</dbReference>
<dbReference type="RefSeq" id="NP_989188.1">
    <property type="nucleotide sequence ID" value="NM_203857.1"/>
</dbReference>
<dbReference type="SMR" id="Q6P4J8"/>
<dbReference type="FunCoup" id="Q6P4J8">
    <property type="interactions" value="3912"/>
</dbReference>
<dbReference type="STRING" id="8364.ENSXETP00000038437"/>
<dbReference type="DNASU" id="394796"/>
<dbReference type="GeneID" id="394796"/>
<dbReference type="KEGG" id="xtr:394796"/>
<dbReference type="AGR" id="Xenbase:XB-GENE-971799"/>
<dbReference type="CTD" id="55234"/>
<dbReference type="Xenbase" id="XB-GENE-971799">
    <property type="gene designation" value="smu1"/>
</dbReference>
<dbReference type="eggNOG" id="KOG0275">
    <property type="taxonomic scope" value="Eukaryota"/>
</dbReference>
<dbReference type="InParanoid" id="Q6P4J8"/>
<dbReference type="OMA" id="MMKQQEP"/>
<dbReference type="OrthoDB" id="538223at2759"/>
<dbReference type="Proteomes" id="UP000008143">
    <property type="component" value="Chromosome 1"/>
</dbReference>
<dbReference type="Bgee" id="ENSXETG00000024145">
    <property type="expression patterns" value="Expressed in egg cell and 14 other cell types or tissues"/>
</dbReference>
<dbReference type="GO" id="GO:0005737">
    <property type="term" value="C:cytoplasm"/>
    <property type="evidence" value="ECO:0007669"/>
    <property type="project" value="UniProtKB-SubCell"/>
</dbReference>
<dbReference type="GO" id="GO:0016607">
    <property type="term" value="C:nuclear speck"/>
    <property type="evidence" value="ECO:0000250"/>
    <property type="project" value="UniProtKB"/>
</dbReference>
<dbReference type="GO" id="GO:0005634">
    <property type="term" value="C:nucleus"/>
    <property type="evidence" value="ECO:0000250"/>
    <property type="project" value="UniProtKB"/>
</dbReference>
<dbReference type="GO" id="GO:0071005">
    <property type="term" value="C:U2-type precatalytic spliceosome"/>
    <property type="evidence" value="ECO:0000250"/>
    <property type="project" value="UniProtKB"/>
</dbReference>
<dbReference type="GO" id="GO:0000398">
    <property type="term" value="P:mRNA splicing, via spliceosome"/>
    <property type="evidence" value="ECO:0000250"/>
    <property type="project" value="UniProtKB"/>
</dbReference>
<dbReference type="GO" id="GO:0000381">
    <property type="term" value="P:regulation of alternative mRNA splicing, via spliceosome"/>
    <property type="evidence" value="ECO:0000250"/>
    <property type="project" value="UniProtKB"/>
</dbReference>
<dbReference type="CDD" id="cd00200">
    <property type="entry name" value="WD40"/>
    <property type="match status" value="1"/>
</dbReference>
<dbReference type="FunFam" id="2.130.10.10:FF:000729">
    <property type="entry name" value="SMU1, DNA replication regulator and spliceosomal factor"/>
    <property type="match status" value="1"/>
</dbReference>
<dbReference type="FunFam" id="2.130.10.10:FF:000754">
    <property type="entry name" value="SMU1, DNA replication regulator and spliceosomal factor"/>
    <property type="match status" value="1"/>
</dbReference>
<dbReference type="FunFam" id="2.130.10.10:FF:000082">
    <property type="entry name" value="WD40 repeat-containing protein SMU1"/>
    <property type="match status" value="1"/>
</dbReference>
<dbReference type="Gene3D" id="2.130.10.10">
    <property type="entry name" value="YVTN repeat-like/Quinoprotein amine dehydrogenase"/>
    <property type="match status" value="2"/>
</dbReference>
<dbReference type="InterPro" id="IPR006595">
    <property type="entry name" value="CTLH_C"/>
</dbReference>
<dbReference type="InterPro" id="IPR020472">
    <property type="entry name" value="G-protein_beta_WD-40_rep"/>
</dbReference>
<dbReference type="InterPro" id="IPR006594">
    <property type="entry name" value="LisH"/>
</dbReference>
<dbReference type="InterPro" id="IPR045184">
    <property type="entry name" value="SMU1"/>
</dbReference>
<dbReference type="InterPro" id="IPR054532">
    <property type="entry name" value="TPL_SMU1_LisH-like"/>
</dbReference>
<dbReference type="InterPro" id="IPR015943">
    <property type="entry name" value="WD40/YVTN_repeat-like_dom_sf"/>
</dbReference>
<dbReference type="InterPro" id="IPR019775">
    <property type="entry name" value="WD40_repeat_CS"/>
</dbReference>
<dbReference type="InterPro" id="IPR036322">
    <property type="entry name" value="WD40_repeat_dom_sf"/>
</dbReference>
<dbReference type="InterPro" id="IPR001680">
    <property type="entry name" value="WD40_rpt"/>
</dbReference>
<dbReference type="PANTHER" id="PTHR22848">
    <property type="entry name" value="WD40 REPEAT PROTEIN"/>
    <property type="match status" value="1"/>
</dbReference>
<dbReference type="Pfam" id="PF17814">
    <property type="entry name" value="LisH_TPL"/>
    <property type="match status" value="1"/>
</dbReference>
<dbReference type="Pfam" id="PF00400">
    <property type="entry name" value="WD40"/>
    <property type="match status" value="5"/>
</dbReference>
<dbReference type="PRINTS" id="PR00320">
    <property type="entry name" value="GPROTEINBRPT"/>
</dbReference>
<dbReference type="SMART" id="SM00668">
    <property type="entry name" value="CTLH"/>
    <property type="match status" value="1"/>
</dbReference>
<dbReference type="SMART" id="SM00667">
    <property type="entry name" value="LisH"/>
    <property type="match status" value="1"/>
</dbReference>
<dbReference type="SMART" id="SM00320">
    <property type="entry name" value="WD40"/>
    <property type="match status" value="7"/>
</dbReference>
<dbReference type="SUPFAM" id="SSF50978">
    <property type="entry name" value="WD40 repeat-like"/>
    <property type="match status" value="1"/>
</dbReference>
<dbReference type="PROSITE" id="PS50897">
    <property type="entry name" value="CTLH"/>
    <property type="match status" value="1"/>
</dbReference>
<dbReference type="PROSITE" id="PS50896">
    <property type="entry name" value="LISH"/>
    <property type="match status" value="1"/>
</dbReference>
<dbReference type="PROSITE" id="PS00678">
    <property type="entry name" value="WD_REPEATS_1"/>
    <property type="match status" value="2"/>
</dbReference>
<dbReference type="PROSITE" id="PS50082">
    <property type="entry name" value="WD_REPEATS_2"/>
    <property type="match status" value="5"/>
</dbReference>
<dbReference type="PROSITE" id="PS50294">
    <property type="entry name" value="WD_REPEATS_REGION"/>
    <property type="match status" value="1"/>
</dbReference>
<proteinExistence type="evidence at transcript level"/>